<reference key="1">
    <citation type="submission" date="2008-05" db="EMBL/GenBank/DDBJ databases">
        <title>Genome sequence of Helicobacter pylori from the remote Amazon: traces of Asian ancestry of the first Americans.</title>
        <authorList>
            <person name="Kersulyte D."/>
            <person name="Kalia A."/>
            <person name="Gilman R.H."/>
            <person name="Berg D.E."/>
        </authorList>
    </citation>
    <scope>NUCLEOTIDE SEQUENCE [LARGE SCALE GENOMIC DNA]</scope>
    <source>
        <strain>Shi470</strain>
    </source>
</reference>
<proteinExistence type="inferred from homology"/>
<protein>
    <recommendedName>
        <fullName evidence="1">Bifunctional enzyme IspD/IspF</fullName>
    </recommendedName>
    <domain>
        <recommendedName>
            <fullName evidence="1">2-C-methyl-D-erythritol 4-phosphate cytidylyltransferase</fullName>
            <ecNumber evidence="1">2.7.7.60</ecNumber>
        </recommendedName>
        <alternativeName>
            <fullName evidence="1">4-diphosphocytidyl-2C-methyl-D-erythritol synthase</fullName>
        </alternativeName>
        <alternativeName>
            <fullName evidence="1">MEP cytidylyltransferase</fullName>
            <shortName evidence="1">MCT</shortName>
        </alternativeName>
    </domain>
    <domain>
        <recommendedName>
            <fullName evidence="1">2-C-methyl-D-erythritol 2,4-cyclodiphosphate synthase</fullName>
            <shortName evidence="1">MECDP-synthase</shortName>
            <shortName evidence="1">MECPP-synthase</shortName>
            <shortName evidence="1">MECPS</shortName>
            <ecNumber evidence="1">4.6.1.12</ecNumber>
        </recommendedName>
    </domain>
</protein>
<gene>
    <name evidence="1" type="primary">ispDF</name>
    <name type="ordered locus">HPSH_02215</name>
</gene>
<keyword id="KW-0414">Isoprene biosynthesis</keyword>
<keyword id="KW-0456">Lyase</keyword>
<keyword id="KW-0479">Metal-binding</keyword>
<keyword id="KW-0511">Multifunctional enzyme</keyword>
<keyword id="KW-0548">Nucleotidyltransferase</keyword>
<keyword id="KW-0808">Transferase</keyword>
<accession>B2USR1</accession>
<name>ISPDF_HELPS</name>
<sequence>MSLIRVNGEAFKLSLESLEEDPFENKETLETLVKQTSVVLLAAGESRRFSQTIKKQWLRSNHTPLWLSVYESFKEALNFKEILLVVSELDYIYIKRHHPEIKLVRGGASRQESVRNALKIIDSAYTLTSDVARGLANIEALKSLFLTLQQTSHYCIAPYLPCYDTAIYYNEVLDREAIKLIQTPQLSHTKTLQSALNQGDFKDESSAILQAFPDLVSYIEGSKDLHKLTTSDDLKHFALFFNPAKDTFIGMGFDTHAFIKDKPMVLGGVVLDCEFGLKAHSDGDALLHAVIDAILGAIKGGDIGEWFPDNDPQYKNASSKELLKIVLDFSQSIGFELLEMGATIFSEIPKITPYKPTILENLSQLLGLEKSQISLKATTMEKMGFIGKQEGLLVQAHVSMRYKQKL</sequence>
<feature type="chain" id="PRO_1000146274" description="Bifunctional enzyme IspD/IspF">
    <location>
        <begin position="1"/>
        <end position="406"/>
    </location>
</feature>
<feature type="region of interest" description="2-C-methyl-D-erythritol 4-phosphate cytidylyltransferase" evidence="1">
    <location>
        <begin position="1"/>
        <end position="247"/>
    </location>
</feature>
<feature type="region of interest" description="2-C-methyl-D-erythritol 2,4-cyclodiphosphate synthase" evidence="1">
    <location>
        <begin position="248"/>
        <end position="406"/>
    </location>
</feature>
<feature type="binding site" evidence="1">
    <location>
        <begin position="254"/>
        <end position="256"/>
    </location>
    <ligand>
        <name>4-CDP-2-C-methyl-D-erythritol 2-phosphate</name>
        <dbReference type="ChEBI" id="CHEBI:57919"/>
    </ligand>
</feature>
<feature type="binding site" evidence="1">
    <location>
        <position position="254"/>
    </location>
    <ligand>
        <name>a divalent metal cation</name>
        <dbReference type="ChEBI" id="CHEBI:60240"/>
    </ligand>
</feature>
<feature type="binding site" evidence="1">
    <location>
        <position position="256"/>
    </location>
    <ligand>
        <name>a divalent metal cation</name>
        <dbReference type="ChEBI" id="CHEBI:60240"/>
    </ligand>
</feature>
<feature type="binding site" evidence="1">
    <location>
        <begin position="280"/>
        <end position="281"/>
    </location>
    <ligand>
        <name>4-CDP-2-C-methyl-D-erythritol 2-phosphate</name>
        <dbReference type="ChEBI" id="CHEBI:57919"/>
    </ligand>
</feature>
<feature type="binding site" evidence="1">
    <location>
        <position position="288"/>
    </location>
    <ligand>
        <name>a divalent metal cation</name>
        <dbReference type="ChEBI" id="CHEBI:60240"/>
    </ligand>
</feature>
<feature type="binding site" evidence="1">
    <location>
        <begin position="302"/>
        <end position="304"/>
    </location>
    <ligand>
        <name>4-CDP-2-C-methyl-D-erythritol 2-phosphate</name>
        <dbReference type="ChEBI" id="CHEBI:57919"/>
    </ligand>
</feature>
<feature type="binding site" evidence="1">
    <location>
        <begin position="307"/>
        <end position="311"/>
    </location>
    <ligand>
        <name>4-CDP-2-C-methyl-D-erythritol 2-phosphate</name>
        <dbReference type="ChEBI" id="CHEBI:57919"/>
    </ligand>
</feature>
<feature type="binding site" evidence="1">
    <location>
        <begin position="378"/>
        <end position="381"/>
    </location>
    <ligand>
        <name>4-CDP-2-C-methyl-D-erythritol 2-phosphate</name>
        <dbReference type="ChEBI" id="CHEBI:57919"/>
    </ligand>
</feature>
<feature type="binding site" evidence="1">
    <location>
        <position position="385"/>
    </location>
    <ligand>
        <name>4-CDP-2-C-methyl-D-erythritol 2-phosphate</name>
        <dbReference type="ChEBI" id="CHEBI:57919"/>
    </ligand>
</feature>
<feature type="binding site" evidence="1">
    <location>
        <position position="388"/>
    </location>
    <ligand>
        <name>4-CDP-2-C-methyl-D-erythritol 2-phosphate</name>
        <dbReference type="ChEBI" id="CHEBI:57919"/>
    </ligand>
</feature>
<feature type="site" description="Transition state stabilizer" evidence="1">
    <location>
        <position position="48"/>
    </location>
</feature>
<feature type="site" description="Transition state stabilizer" evidence="1">
    <location>
        <position position="55"/>
    </location>
</feature>
<feature type="site" description="Positions MEP for the nucleophilic attack" evidence="1">
    <location>
        <position position="175"/>
    </location>
</feature>
<feature type="site" description="Positions MEP for the nucleophilic attack" evidence="1">
    <location>
        <position position="227"/>
    </location>
</feature>
<feature type="site" description="Transition state stabilizer" evidence="1">
    <location>
        <position position="280"/>
    </location>
</feature>
<feature type="site" description="Transition state stabilizer" evidence="1">
    <location>
        <position position="379"/>
    </location>
</feature>
<evidence type="ECO:0000255" key="1">
    <source>
        <dbReference type="HAMAP-Rule" id="MF_01520"/>
    </source>
</evidence>
<comment type="function">
    <text evidence="1">Bifunctional enzyme that catalyzes the formation of 4-diphosphocytidyl-2-C-methyl-D-erythritol from CTP and 2-C-methyl-D-erythritol 4-phosphate (MEP) (IspD), and catalyzes the conversion of 4-diphosphocytidyl-2-C-methyl-D-erythritol 2-phosphate (CDP-ME2P) to 2-C-methyl-D-erythritol 2,4-cyclodiphosphate (ME-CPP) with a corresponding release of cytidine 5-monophosphate (CMP) (IspF).</text>
</comment>
<comment type="catalytic activity">
    <reaction evidence="1">
        <text>2-C-methyl-D-erythritol 4-phosphate + CTP + H(+) = 4-CDP-2-C-methyl-D-erythritol + diphosphate</text>
        <dbReference type="Rhea" id="RHEA:13429"/>
        <dbReference type="ChEBI" id="CHEBI:15378"/>
        <dbReference type="ChEBI" id="CHEBI:33019"/>
        <dbReference type="ChEBI" id="CHEBI:37563"/>
        <dbReference type="ChEBI" id="CHEBI:57823"/>
        <dbReference type="ChEBI" id="CHEBI:58262"/>
        <dbReference type="EC" id="2.7.7.60"/>
    </reaction>
</comment>
<comment type="catalytic activity">
    <reaction evidence="1">
        <text>4-CDP-2-C-methyl-D-erythritol 2-phosphate = 2-C-methyl-D-erythritol 2,4-cyclic diphosphate + CMP</text>
        <dbReference type="Rhea" id="RHEA:23864"/>
        <dbReference type="ChEBI" id="CHEBI:57919"/>
        <dbReference type="ChEBI" id="CHEBI:58483"/>
        <dbReference type="ChEBI" id="CHEBI:60377"/>
        <dbReference type="EC" id="4.6.1.12"/>
    </reaction>
</comment>
<comment type="cofactor">
    <cofactor evidence="1">
        <name>a divalent metal cation</name>
        <dbReference type="ChEBI" id="CHEBI:60240"/>
    </cofactor>
</comment>
<comment type="pathway">
    <text evidence="1">Isoprenoid biosynthesis; isopentenyl diphosphate biosynthesis via DXP pathway; isopentenyl diphosphate from 1-deoxy-D-xylulose 5-phosphate: step 2/6.</text>
</comment>
<comment type="pathway">
    <text evidence="1">Isoprenoid biosynthesis; isopentenyl diphosphate biosynthesis via DXP pathway; isopentenyl diphosphate from 1-deoxy-D-xylulose 5-phosphate: step 4/6.</text>
</comment>
<comment type="similarity">
    <text evidence="1">In the N-terminal section; belongs to the IspD/TarI cytidylyltransferase family. IspD subfamily.</text>
</comment>
<comment type="similarity">
    <text evidence="1">In the C-terminal section; belongs to the IspF family.</text>
</comment>
<organism>
    <name type="scientific">Helicobacter pylori (strain Shi470)</name>
    <dbReference type="NCBI Taxonomy" id="512562"/>
    <lineage>
        <taxon>Bacteria</taxon>
        <taxon>Pseudomonadati</taxon>
        <taxon>Campylobacterota</taxon>
        <taxon>Epsilonproteobacteria</taxon>
        <taxon>Campylobacterales</taxon>
        <taxon>Helicobacteraceae</taxon>
        <taxon>Helicobacter</taxon>
    </lineage>
</organism>
<dbReference type="EC" id="2.7.7.60" evidence="1"/>
<dbReference type="EC" id="4.6.1.12" evidence="1"/>
<dbReference type="EMBL" id="CP001072">
    <property type="protein sequence ID" value="ACD47893.1"/>
    <property type="molecule type" value="Genomic_DNA"/>
</dbReference>
<dbReference type="RefSeq" id="WP_000052903.1">
    <property type="nucleotide sequence ID" value="NC_010698.2"/>
</dbReference>
<dbReference type="SMR" id="B2USR1"/>
<dbReference type="KEGG" id="hps:HPSH_02215"/>
<dbReference type="HOGENOM" id="CLU_042800_2_6_7"/>
<dbReference type="UniPathway" id="UPA00056">
    <property type="reaction ID" value="UER00093"/>
</dbReference>
<dbReference type="UniPathway" id="UPA00056">
    <property type="reaction ID" value="UER00095"/>
</dbReference>
<dbReference type="GO" id="GO:0008685">
    <property type="term" value="F:2-C-methyl-D-erythritol 2,4-cyclodiphosphate synthase activity"/>
    <property type="evidence" value="ECO:0007669"/>
    <property type="project" value="UniProtKB-UniRule"/>
</dbReference>
<dbReference type="GO" id="GO:0050518">
    <property type="term" value="F:2-C-methyl-D-erythritol 4-phosphate cytidylyltransferase activity"/>
    <property type="evidence" value="ECO:0007669"/>
    <property type="project" value="UniProtKB-UniRule"/>
</dbReference>
<dbReference type="GO" id="GO:0046872">
    <property type="term" value="F:metal ion binding"/>
    <property type="evidence" value="ECO:0007669"/>
    <property type="project" value="UniProtKB-KW"/>
</dbReference>
<dbReference type="GO" id="GO:0019288">
    <property type="term" value="P:isopentenyl diphosphate biosynthetic process, methylerythritol 4-phosphate pathway"/>
    <property type="evidence" value="ECO:0007669"/>
    <property type="project" value="UniProtKB-UniRule"/>
</dbReference>
<dbReference type="GO" id="GO:0016114">
    <property type="term" value="P:terpenoid biosynthetic process"/>
    <property type="evidence" value="ECO:0007669"/>
    <property type="project" value="InterPro"/>
</dbReference>
<dbReference type="CDD" id="cd02516">
    <property type="entry name" value="CDP-ME_synthetase"/>
    <property type="match status" value="1"/>
</dbReference>
<dbReference type="CDD" id="cd00554">
    <property type="entry name" value="MECDP_synthase"/>
    <property type="match status" value="1"/>
</dbReference>
<dbReference type="FunFam" id="3.30.1330.50:FF:000005">
    <property type="entry name" value="Bifunctional enzyme IspD/IspF"/>
    <property type="match status" value="1"/>
</dbReference>
<dbReference type="Gene3D" id="3.30.1330.50">
    <property type="entry name" value="2-C-methyl-D-erythritol 2,4-cyclodiphosphate synthase"/>
    <property type="match status" value="1"/>
</dbReference>
<dbReference type="Gene3D" id="3.90.550.10">
    <property type="entry name" value="Spore Coat Polysaccharide Biosynthesis Protein SpsA, Chain A"/>
    <property type="match status" value="1"/>
</dbReference>
<dbReference type="HAMAP" id="MF_01520">
    <property type="entry name" value="IspDF"/>
    <property type="match status" value="1"/>
</dbReference>
<dbReference type="HAMAP" id="MF_00107">
    <property type="entry name" value="IspF"/>
    <property type="match status" value="1"/>
</dbReference>
<dbReference type="InterPro" id="IPR026596">
    <property type="entry name" value="IspD/F"/>
</dbReference>
<dbReference type="InterPro" id="IPR034683">
    <property type="entry name" value="IspD/TarI"/>
</dbReference>
<dbReference type="InterPro" id="IPR018294">
    <property type="entry name" value="ISPD_synthase_CS"/>
</dbReference>
<dbReference type="InterPro" id="IPR003526">
    <property type="entry name" value="MECDP_synthase"/>
</dbReference>
<dbReference type="InterPro" id="IPR020555">
    <property type="entry name" value="MECDP_synthase_CS"/>
</dbReference>
<dbReference type="InterPro" id="IPR036571">
    <property type="entry name" value="MECDP_synthase_sf"/>
</dbReference>
<dbReference type="InterPro" id="IPR029044">
    <property type="entry name" value="Nucleotide-diphossugar_trans"/>
</dbReference>
<dbReference type="NCBIfam" id="TIGR00151">
    <property type="entry name" value="ispF"/>
    <property type="match status" value="1"/>
</dbReference>
<dbReference type="NCBIfam" id="NF006899">
    <property type="entry name" value="PRK09382.1"/>
    <property type="match status" value="1"/>
</dbReference>
<dbReference type="PANTHER" id="PTHR43181">
    <property type="entry name" value="2-C-METHYL-D-ERYTHRITOL 2,4-CYCLODIPHOSPHATE SYNTHASE, CHLOROPLASTIC"/>
    <property type="match status" value="1"/>
</dbReference>
<dbReference type="PANTHER" id="PTHR43181:SF1">
    <property type="entry name" value="2-C-METHYL-D-ERYTHRITOL 2,4-CYCLODIPHOSPHATE SYNTHASE, CHLOROPLASTIC"/>
    <property type="match status" value="1"/>
</dbReference>
<dbReference type="Pfam" id="PF01128">
    <property type="entry name" value="IspD"/>
    <property type="match status" value="1"/>
</dbReference>
<dbReference type="Pfam" id="PF02542">
    <property type="entry name" value="YgbB"/>
    <property type="match status" value="1"/>
</dbReference>
<dbReference type="SUPFAM" id="SSF69765">
    <property type="entry name" value="IpsF-like"/>
    <property type="match status" value="1"/>
</dbReference>
<dbReference type="SUPFAM" id="SSF53448">
    <property type="entry name" value="Nucleotide-diphospho-sugar transferases"/>
    <property type="match status" value="1"/>
</dbReference>
<dbReference type="PROSITE" id="PS01295">
    <property type="entry name" value="ISPD"/>
    <property type="match status" value="1"/>
</dbReference>
<dbReference type="PROSITE" id="PS01350">
    <property type="entry name" value="ISPF"/>
    <property type="match status" value="1"/>
</dbReference>